<dbReference type="EMBL" id="X55270">
    <property type="protein sequence ID" value="CAA38991.1"/>
    <property type="molecule type" value="mRNA"/>
</dbReference>
<dbReference type="PIR" id="S13721">
    <property type="entry name" value="S13721"/>
</dbReference>
<dbReference type="SMR" id="P21551"/>
<dbReference type="GlyCosmos" id="P21551">
    <property type="glycosylation" value="3 sites, No reported glycans"/>
</dbReference>
<dbReference type="GO" id="GO:0005615">
    <property type="term" value="C:extracellular space"/>
    <property type="evidence" value="ECO:0007669"/>
    <property type="project" value="TreeGrafter"/>
</dbReference>
<dbReference type="GO" id="GO:0005125">
    <property type="term" value="F:cytokine activity"/>
    <property type="evidence" value="ECO:0007669"/>
    <property type="project" value="TreeGrafter"/>
</dbReference>
<dbReference type="GO" id="GO:0005109">
    <property type="term" value="F:frizzled binding"/>
    <property type="evidence" value="ECO:0007669"/>
    <property type="project" value="TreeGrafter"/>
</dbReference>
<dbReference type="GO" id="GO:0060070">
    <property type="term" value="P:canonical Wnt signaling pathway"/>
    <property type="evidence" value="ECO:0007669"/>
    <property type="project" value="TreeGrafter"/>
</dbReference>
<dbReference type="GO" id="GO:0045165">
    <property type="term" value="P:cell fate commitment"/>
    <property type="evidence" value="ECO:0007669"/>
    <property type="project" value="TreeGrafter"/>
</dbReference>
<dbReference type="GO" id="GO:0030182">
    <property type="term" value="P:neuron differentiation"/>
    <property type="evidence" value="ECO:0007669"/>
    <property type="project" value="TreeGrafter"/>
</dbReference>
<dbReference type="CDD" id="cd19333">
    <property type="entry name" value="Wnt_Wnt1"/>
    <property type="match status" value="1"/>
</dbReference>
<dbReference type="FunFam" id="3.30.2460.20:FF:000001">
    <property type="entry name" value="Wnt homolog"/>
    <property type="match status" value="1"/>
</dbReference>
<dbReference type="Gene3D" id="3.30.2460.20">
    <property type="match status" value="1"/>
</dbReference>
<dbReference type="InterPro" id="IPR005817">
    <property type="entry name" value="Wnt"/>
</dbReference>
<dbReference type="InterPro" id="IPR009139">
    <property type="entry name" value="Wnt1"/>
</dbReference>
<dbReference type="InterPro" id="IPR043158">
    <property type="entry name" value="Wnt_C"/>
</dbReference>
<dbReference type="InterPro" id="IPR018161">
    <property type="entry name" value="Wnt_CS"/>
</dbReference>
<dbReference type="PANTHER" id="PTHR12027:SF91">
    <property type="entry name" value="PROTO-ONCOGENE WNT-1"/>
    <property type="match status" value="1"/>
</dbReference>
<dbReference type="PANTHER" id="PTHR12027">
    <property type="entry name" value="WNT RELATED"/>
    <property type="match status" value="1"/>
</dbReference>
<dbReference type="Pfam" id="PF00110">
    <property type="entry name" value="wnt"/>
    <property type="match status" value="1"/>
</dbReference>
<dbReference type="PRINTS" id="PR01841">
    <property type="entry name" value="WNT1PROTEIN"/>
</dbReference>
<dbReference type="PRINTS" id="PR01349">
    <property type="entry name" value="WNTPROTEIN"/>
</dbReference>
<dbReference type="SMART" id="SM00097">
    <property type="entry name" value="WNT1"/>
    <property type="match status" value="1"/>
</dbReference>
<dbReference type="PROSITE" id="PS00246">
    <property type="entry name" value="WNT1"/>
    <property type="match status" value="1"/>
</dbReference>
<evidence type="ECO:0000250" key="1">
    <source>
        <dbReference type="UniProtKB" id="P04426"/>
    </source>
</evidence>
<evidence type="ECO:0000250" key="2">
    <source>
        <dbReference type="UniProtKB" id="P04628"/>
    </source>
</evidence>
<evidence type="ECO:0000250" key="3">
    <source>
        <dbReference type="UniProtKB" id="P28026"/>
    </source>
</evidence>
<evidence type="ECO:0000250" key="4">
    <source>
        <dbReference type="UniProtKB" id="P56704"/>
    </source>
</evidence>
<evidence type="ECO:0000250" key="5">
    <source>
        <dbReference type="UniProtKB" id="Q91029"/>
    </source>
</evidence>
<evidence type="ECO:0000255" key="6"/>
<evidence type="ECO:0000256" key="7">
    <source>
        <dbReference type="SAM" id="MobiDB-lite"/>
    </source>
</evidence>
<evidence type="ECO:0000269" key="8">
    <source>
    </source>
</evidence>
<evidence type="ECO:0000305" key="9"/>
<sequence>MRPMTFIVGLKTLWILAFSSLSNTLAVNNSGRWWGVVNVVTSTNLLTDTKNVQLVLDPSLQLLSRKQRKLIRQNPGILHSINSGLQSAMKECKWQFRSRRWNCPTTGGDNIFGKIVNKGCRETAFIFAITSAGVTHSVARSCSEGSIESCTCDYRRRGPGGTDWHWGGCSDNIDFGRVFGREFVDSSERGRDLRYLMNRHNNEAGRMTVFSEMKQECKCHGMSGSCAVRTCWMRLPTFRAVGDFLKDRFDGASRVIYGNKGSNRASRVQTHHLEPENPTHKPPSPQDLVYFEKSPNFCTYNGKTGTSGTSGRVCNSSSLGLDGCELLCCGRGYRTKTQRVTERCHCTFHWCCHVSCLNCTNTQVLHECL</sequence>
<keyword id="KW-0217">Developmental protein</keyword>
<keyword id="KW-1015">Disulfide bond</keyword>
<keyword id="KW-0272">Extracellular matrix</keyword>
<keyword id="KW-0325">Glycoprotein</keyword>
<keyword id="KW-0449">Lipoprotein</keyword>
<keyword id="KW-0964">Secreted</keyword>
<keyword id="KW-0732">Signal</keyword>
<keyword id="KW-0879">Wnt signaling pathway</keyword>
<reference key="1">
    <citation type="journal article" date="1990" name="Nucleic Acids Res.">
        <title>Nucleotide sequence of a cDNA encoding Wnt-1 of the Mexican axolotl Ambystoma mexicanum.</title>
        <authorList>
            <person name="Busse U."/>
            <person name="Guay J."/>
            <person name="Seguin C."/>
        </authorList>
    </citation>
    <scope>NUCLEOTIDE SEQUENCE [MRNA]</scope>
</reference>
<reference key="2">
    <citation type="journal article" date="1991" name="Nucleic Acids Res.">
        <authorList>
            <person name="Busse U."/>
            <person name="Guay J."/>
            <person name="Seguin C."/>
        </authorList>
    </citation>
    <scope>ERRATUM OF PUBMED:2259633</scope>
</reference>
<reference key="3">
    <citation type="journal article" date="1993" name="Differentiation">
        <title>Molecular analysis of the Wnt-1 proto-oncogene in Ambystoma mexicanum (axolotl) embryos.</title>
        <authorList>
            <person name="Busse U."/>
            <person name="Seguin C."/>
        </authorList>
    </citation>
    <scope>DEVELOPMENTAL STAGE</scope>
</reference>
<protein>
    <recommendedName>
        <fullName>Protein Wnt-1</fullName>
    </recommendedName>
</protein>
<name>WNT1_AMBME</name>
<gene>
    <name type="primary">WNT-1</name>
</gene>
<accession>P21551</accession>
<feature type="signal peptide" evidence="6">
    <location>
        <begin position="1"/>
        <end position="19"/>
    </location>
</feature>
<feature type="chain" id="PRO_0000041407" description="Protein Wnt-1">
    <location>
        <begin position="20"/>
        <end position="369"/>
    </location>
</feature>
<feature type="region of interest" description="Disordered" evidence="7">
    <location>
        <begin position="263"/>
        <end position="285"/>
    </location>
</feature>
<feature type="lipid moiety-binding region" description="O-palmitoleoyl serine; by PORCN" evidence="5">
    <location>
        <position position="223"/>
    </location>
</feature>
<feature type="glycosylation site" description="N-linked (GlcNAc...) asparagine" evidence="6">
    <location>
        <position position="28"/>
    </location>
</feature>
<feature type="glycosylation site" description="N-linked (GlcNAc...) asparagine" evidence="6">
    <location>
        <position position="315"/>
    </location>
</feature>
<feature type="glycosylation site" description="N-linked (GlcNAc...) asparagine" evidence="6">
    <location>
        <position position="358"/>
    </location>
</feature>
<feature type="disulfide bond" evidence="3">
    <location>
        <begin position="92"/>
        <end position="103"/>
    </location>
</feature>
<feature type="disulfide bond" evidence="3">
    <location>
        <begin position="142"/>
        <end position="150"/>
    </location>
</feature>
<feature type="disulfide bond" evidence="3">
    <location>
        <begin position="152"/>
        <end position="169"/>
    </location>
</feature>
<feature type="disulfide bond" evidence="3">
    <location>
        <begin position="217"/>
        <end position="231"/>
    </location>
</feature>
<feature type="disulfide bond" evidence="3">
    <location>
        <begin position="219"/>
        <end position="226"/>
    </location>
</feature>
<feature type="disulfide bond" evidence="3">
    <location>
        <begin position="298"/>
        <end position="329"/>
    </location>
</feature>
<feature type="disulfide bond" evidence="3">
    <location>
        <begin position="314"/>
        <end position="324"/>
    </location>
</feature>
<feature type="disulfide bond" evidence="3">
    <location>
        <begin position="328"/>
        <end position="368"/>
    </location>
</feature>
<feature type="disulfide bond" evidence="3">
    <location>
        <begin position="344"/>
        <end position="359"/>
    </location>
</feature>
<feature type="disulfide bond" evidence="3">
    <location>
        <begin position="346"/>
        <end position="356"/>
    </location>
</feature>
<feature type="disulfide bond" evidence="3">
    <location>
        <begin position="351"/>
        <end position="352"/>
    </location>
</feature>
<comment type="function">
    <text evidence="1 2">Ligand for members of the frizzled family of seven transmembrane receptors. Acts in the canonical Wnt signaling pathway by promoting beta-catenin-dependent transcriptional activation (By similarity). Plays an essential role in the development of the embryonic brain and central nervous system (CNS) (By similarity). Has a role in osteoblast function, bone development and bone homeostasis (By similarity).</text>
</comment>
<comment type="subcellular location">
    <subcellularLocation>
        <location evidence="2">Secreted</location>
        <location evidence="2">Extracellular space</location>
        <location evidence="2">Extracellular matrix</location>
    </subcellularLocation>
    <subcellularLocation>
        <location evidence="2">Secreted</location>
    </subcellularLocation>
</comment>
<comment type="developmental stage">
    <text evidence="8">Early blastula until gastrulation, barely expressed during gastrulation and present again from neurulation until late embryogenesis.</text>
</comment>
<comment type="PTM">
    <text evidence="4 5">Palmitoleoylation is required for efficient binding to frizzled receptors. Palmitoleoylation is necessary for proper trafficking to cell surface (By similarity). Depalmitoleoylated by NOTUM, leading to inhibit Wnt signaling pathway (By similarity).</text>
</comment>
<comment type="similarity">
    <text evidence="9">Belongs to the Wnt family.</text>
</comment>
<organism>
    <name type="scientific">Ambystoma mexicanum</name>
    <name type="common">Axolotl</name>
    <dbReference type="NCBI Taxonomy" id="8296"/>
    <lineage>
        <taxon>Eukaryota</taxon>
        <taxon>Metazoa</taxon>
        <taxon>Chordata</taxon>
        <taxon>Craniata</taxon>
        <taxon>Vertebrata</taxon>
        <taxon>Euteleostomi</taxon>
        <taxon>Amphibia</taxon>
        <taxon>Batrachia</taxon>
        <taxon>Caudata</taxon>
        <taxon>Salamandroidea</taxon>
        <taxon>Ambystomatidae</taxon>
        <taxon>Ambystoma</taxon>
    </lineage>
</organism>
<proteinExistence type="evidence at transcript level"/>